<proteinExistence type="evidence at protein level"/>
<name>UBE2W_MOUSE</name>
<dbReference type="EC" id="2.3.2.23"/>
<dbReference type="EC" id="2.3.2.25"/>
<dbReference type="EMBL" id="AK015348">
    <property type="protein sequence ID" value="BAB29807.1"/>
    <property type="molecule type" value="mRNA"/>
</dbReference>
<dbReference type="EMBL" id="AK044463">
    <property type="protein sequence ID" value="BAC31935.1"/>
    <property type="molecule type" value="mRNA"/>
</dbReference>
<dbReference type="EMBL" id="AK046086">
    <property type="protein sequence ID" value="BAC32599.1"/>
    <property type="molecule type" value="mRNA"/>
</dbReference>
<dbReference type="EMBL" id="AK050679">
    <property type="protein sequence ID" value="BAC34377.1"/>
    <property type="molecule type" value="mRNA"/>
</dbReference>
<dbReference type="EMBL" id="AK077997">
    <property type="protein sequence ID" value="BAC37094.1"/>
    <property type="status" value="ALT_INIT"/>
    <property type="molecule type" value="mRNA"/>
</dbReference>
<dbReference type="EMBL" id="AK082233">
    <property type="protein sequence ID" value="BAC38443.1"/>
    <property type="molecule type" value="mRNA"/>
</dbReference>
<dbReference type="EMBL" id="BC020124">
    <property type="protein sequence ID" value="AAH20124.1"/>
    <property type="molecule type" value="mRNA"/>
</dbReference>
<dbReference type="CCDS" id="CCDS48224.3"/>
<dbReference type="RefSeq" id="NP_080049.3">
    <property type="nucleotide sequence ID" value="NM_025773.4"/>
</dbReference>
<dbReference type="SMR" id="Q8VDW4"/>
<dbReference type="BioGRID" id="211726">
    <property type="interactions" value="2"/>
</dbReference>
<dbReference type="FunCoup" id="Q8VDW4">
    <property type="interactions" value="4141"/>
</dbReference>
<dbReference type="STRING" id="10090.ENSMUSP00000157633"/>
<dbReference type="PhosphoSitePlus" id="Q8VDW4"/>
<dbReference type="PaxDb" id="10090-ENSMUSP00000112741"/>
<dbReference type="PeptideAtlas" id="Q8VDW4"/>
<dbReference type="ProteomicsDB" id="298404"/>
<dbReference type="Pumba" id="Q8VDW4"/>
<dbReference type="Ensembl" id="ENSMUST00000117146.9">
    <property type="protein sequence ID" value="ENSMUSP00000112741.4"/>
    <property type="gene ID" value="ENSMUSG00000025939.20"/>
</dbReference>
<dbReference type="GeneID" id="66799"/>
<dbReference type="KEGG" id="mmu:66799"/>
<dbReference type="AGR" id="MGI:1914049"/>
<dbReference type="CTD" id="55284"/>
<dbReference type="MGI" id="MGI:1914049">
    <property type="gene designation" value="Ube2w"/>
</dbReference>
<dbReference type="VEuPathDB" id="HostDB:ENSMUSG00000025939"/>
<dbReference type="eggNOG" id="KOG0427">
    <property type="taxonomic scope" value="Eukaryota"/>
</dbReference>
<dbReference type="GeneTree" id="ENSGT00940000156908"/>
<dbReference type="InParanoid" id="Q8VDW4"/>
<dbReference type="OMA" id="WQMDIKV"/>
<dbReference type="OrthoDB" id="406833at2759"/>
<dbReference type="PhylomeDB" id="Q8VDW4"/>
<dbReference type="TreeFam" id="TF314582"/>
<dbReference type="BRENDA" id="2.3.2.25">
    <property type="organism ID" value="3474"/>
</dbReference>
<dbReference type="Reactome" id="R-MMU-8866652">
    <property type="pathway name" value="Synthesis of active ubiquitin: roles of E1 and E2 enzymes"/>
</dbReference>
<dbReference type="Reactome" id="R-MMU-983168">
    <property type="pathway name" value="Antigen processing: Ubiquitination &amp; Proteasome degradation"/>
</dbReference>
<dbReference type="UniPathway" id="UPA00143"/>
<dbReference type="BioGRID-ORCS" id="66799">
    <property type="hits" value="5 hits in 114 CRISPR screens"/>
</dbReference>
<dbReference type="ChiTaRS" id="Ube2w">
    <property type="organism name" value="mouse"/>
</dbReference>
<dbReference type="PRO" id="PR:Q8VDW4"/>
<dbReference type="Proteomes" id="UP000000589">
    <property type="component" value="Chromosome 1"/>
</dbReference>
<dbReference type="RNAct" id="Q8VDW4">
    <property type="molecule type" value="protein"/>
</dbReference>
<dbReference type="Bgee" id="ENSMUSG00000025939">
    <property type="expression patterns" value="Expressed in cumulus cell and 258 other cell types or tissues"/>
</dbReference>
<dbReference type="ExpressionAtlas" id="Q8VDW4">
    <property type="expression patterns" value="baseline and differential"/>
</dbReference>
<dbReference type="GO" id="GO:0005634">
    <property type="term" value="C:nucleus"/>
    <property type="evidence" value="ECO:0000314"/>
    <property type="project" value="UniProtKB"/>
</dbReference>
<dbReference type="GO" id="GO:0005524">
    <property type="term" value="F:ATP binding"/>
    <property type="evidence" value="ECO:0007669"/>
    <property type="project" value="UniProtKB-KW"/>
</dbReference>
<dbReference type="GO" id="GO:0061631">
    <property type="term" value="F:ubiquitin conjugating enzyme activity"/>
    <property type="evidence" value="ECO:0000314"/>
    <property type="project" value="MGI"/>
</dbReference>
<dbReference type="GO" id="GO:0031625">
    <property type="term" value="F:ubiquitin protein ligase binding"/>
    <property type="evidence" value="ECO:0000353"/>
    <property type="project" value="UniProtKB"/>
</dbReference>
<dbReference type="GO" id="GO:0004842">
    <property type="term" value="F:ubiquitin-protein transferase activity"/>
    <property type="evidence" value="ECO:0000314"/>
    <property type="project" value="UniProtKB"/>
</dbReference>
<dbReference type="GO" id="GO:0140374">
    <property type="term" value="P:antiviral innate immune response"/>
    <property type="evidence" value="ECO:0007669"/>
    <property type="project" value="Ensembl"/>
</dbReference>
<dbReference type="GO" id="GO:0071218">
    <property type="term" value="P:cellular response to misfolded protein"/>
    <property type="evidence" value="ECO:0000315"/>
    <property type="project" value="UniProtKB"/>
</dbReference>
<dbReference type="GO" id="GO:0006281">
    <property type="term" value="P:DNA repair"/>
    <property type="evidence" value="ECO:0007669"/>
    <property type="project" value="UniProtKB-KW"/>
</dbReference>
<dbReference type="GO" id="GO:1904262">
    <property type="term" value="P:negative regulation of TORC1 signaling"/>
    <property type="evidence" value="ECO:0007669"/>
    <property type="project" value="Ensembl"/>
</dbReference>
<dbReference type="GO" id="GO:0043161">
    <property type="term" value="P:proteasome-mediated ubiquitin-dependent protein catabolic process"/>
    <property type="evidence" value="ECO:0000315"/>
    <property type="project" value="UniProtKB"/>
</dbReference>
<dbReference type="GO" id="GO:0070979">
    <property type="term" value="P:protein K11-linked ubiquitination"/>
    <property type="evidence" value="ECO:0000250"/>
    <property type="project" value="UniProtKB"/>
</dbReference>
<dbReference type="GO" id="GO:0006513">
    <property type="term" value="P:protein monoubiquitination"/>
    <property type="evidence" value="ECO:0000314"/>
    <property type="project" value="UniProtKB"/>
</dbReference>
<dbReference type="GO" id="GO:0006515">
    <property type="term" value="P:protein quality control for misfolded or incompletely synthesized proteins"/>
    <property type="evidence" value="ECO:0000315"/>
    <property type="project" value="UniProtKB"/>
</dbReference>
<dbReference type="CDD" id="cd23808">
    <property type="entry name" value="UBCc_UBE2W"/>
    <property type="match status" value="1"/>
</dbReference>
<dbReference type="FunFam" id="3.10.110.10:FF:000022">
    <property type="entry name" value="Ubiquitin-conjugating enzyme E2 W"/>
    <property type="match status" value="1"/>
</dbReference>
<dbReference type="Gene3D" id="3.10.110.10">
    <property type="entry name" value="Ubiquitin Conjugating Enzyme"/>
    <property type="match status" value="1"/>
</dbReference>
<dbReference type="InterPro" id="IPR050113">
    <property type="entry name" value="Ub_conjugating_enzyme"/>
</dbReference>
<dbReference type="InterPro" id="IPR000608">
    <property type="entry name" value="UBQ-conjugat_E2_core"/>
</dbReference>
<dbReference type="InterPro" id="IPR016135">
    <property type="entry name" value="UBQ-conjugating_enzyme/RWD"/>
</dbReference>
<dbReference type="PANTHER" id="PTHR24067">
    <property type="entry name" value="UBIQUITIN-CONJUGATING ENZYME E2"/>
    <property type="match status" value="1"/>
</dbReference>
<dbReference type="Pfam" id="PF00179">
    <property type="entry name" value="UQ_con"/>
    <property type="match status" value="1"/>
</dbReference>
<dbReference type="SMART" id="SM00212">
    <property type="entry name" value="UBCc"/>
    <property type="match status" value="1"/>
</dbReference>
<dbReference type="SUPFAM" id="SSF54495">
    <property type="entry name" value="UBC-like"/>
    <property type="match status" value="1"/>
</dbReference>
<dbReference type="PROSITE" id="PS50127">
    <property type="entry name" value="UBC_2"/>
    <property type="match status" value="1"/>
</dbReference>
<protein>
    <recommendedName>
        <fullName>Ubiquitin-conjugating enzyme E2 W</fullName>
        <ecNumber>2.3.2.23</ecNumber>
    </recommendedName>
    <alternativeName>
        <fullName>E2 ubiquitin-conjugating enzyme W</fullName>
    </alternativeName>
    <alternativeName>
        <fullName>N-terminal E2 ubiquitin-conjugating enzyme</fullName>
        <ecNumber>2.3.2.25</ecNumber>
    </alternativeName>
    <alternativeName>
        <fullName>N-terminus-conjugating E2</fullName>
    </alternativeName>
    <alternativeName>
        <fullName>Ubiquitin carrier protein W</fullName>
    </alternativeName>
    <alternativeName>
        <fullName>Ubiquitin-protein ligase W</fullName>
    </alternativeName>
</protein>
<comment type="function">
    <text evidence="1 3 4">Accepts ubiquitin from the E1 complex and catalyzes its covalent attachment to other proteins. Specifically monoubiquitinates the N-terminus of various substrates, including ATXN3, MAPT/TAU, POLR2H/RPB8 and STUB1/CHIP, by recognizing backbone atoms of disordered N-termini (PubMed:21229326, PubMed:21855799). Involved in degradation of misfolded chaperone substrates by mediating monoubiquitination of STUB1/CHIP, leading to recruitment of ATXN3 to monoubiquitinated STUB1/CHIP, and restriction of the length of ubiquitin chain attached to STUB1/CHIP substrates by ATXN3 (PubMed:21855799). After UV irradiation, but not after mitomycin-C (MMC) treatment, acts as a specific E2 ubiquitin-conjugating enzyme for the Fanconi anemia complex by associating with E3 ubiquitin-protein ligase FANCL and catalyzing monoubiquitination of FANCD2, a key step in the DNA damage pathway (PubMed:21229326). In vitro catalyzes 'Lys-11'-linked polyubiquitination. UBE2W-catalyzed ubiquitination also occurs in the presence of inactive RING/U-box type E3s, i.e. lacking the active site cysteine residues to form thioester bonds with ubiquitin, or even in the absence of E3, albeit at a slower rate (By similarity).</text>
</comment>
<comment type="catalytic activity">
    <reaction evidence="1 2">
        <text>S-ubiquitinyl-[E1 ubiquitin-activating enzyme]-L-cysteine + [E2 ubiquitin-conjugating enzyme]-L-cysteine = [E1 ubiquitin-activating enzyme]-L-cysteine + S-ubiquitinyl-[E2 ubiquitin-conjugating enzyme]-L-cysteine.</text>
        <dbReference type="EC" id="2.3.2.23"/>
    </reaction>
</comment>
<comment type="catalytic activity">
    <reaction evidence="1">
        <text>S-ubiquitinyl-[E1 ubiquitin-activating enzyme]-L-cysteine + [acceptor protein]-N-terminal-amino acid = [E1 ubiquitin-activating enzyme]-L-cysteine + N-terminal-ubiquitinyl-[acceptor protein].</text>
        <dbReference type="EC" id="2.3.2.25"/>
    </reaction>
</comment>
<comment type="pathway">
    <text evidence="2">Protein modification; protein ubiquitination.</text>
</comment>
<comment type="subunit">
    <text evidence="1 3 4">Homodimer (By similarity). Interacts with FANCL. Interacts with STUB1/CHIP.</text>
</comment>
<comment type="subcellular location">
    <subcellularLocation>
        <location evidence="3">Nucleus</location>
    </subcellularLocation>
    <text>In the nucleus, colocalizes with FANCL.</text>
</comment>
<comment type="PTM">
    <text evidence="1">Autoubiquitinated at Met-1.</text>
</comment>
<comment type="similarity">
    <text evidence="2">Belongs to the ubiquitin-conjugating enzyme family.</text>
</comment>
<comment type="sequence caution" evidence="5">
    <conflict type="erroneous initiation">
        <sequence resource="EMBL-CDS" id="BAC37094"/>
    </conflict>
    <text>Truncated N-terminus.</text>
</comment>
<keyword id="KW-0067">ATP-binding</keyword>
<keyword id="KW-0227">DNA damage</keyword>
<keyword id="KW-0234">DNA repair</keyword>
<keyword id="KW-0547">Nucleotide-binding</keyword>
<keyword id="KW-0539">Nucleus</keyword>
<keyword id="KW-1185">Reference proteome</keyword>
<keyword id="KW-0808">Transferase</keyword>
<keyword id="KW-0832">Ubl conjugation</keyword>
<keyword id="KW-0833">Ubl conjugation pathway</keyword>
<organism>
    <name type="scientific">Mus musculus</name>
    <name type="common">Mouse</name>
    <dbReference type="NCBI Taxonomy" id="10090"/>
    <lineage>
        <taxon>Eukaryota</taxon>
        <taxon>Metazoa</taxon>
        <taxon>Chordata</taxon>
        <taxon>Craniata</taxon>
        <taxon>Vertebrata</taxon>
        <taxon>Euteleostomi</taxon>
        <taxon>Mammalia</taxon>
        <taxon>Eutheria</taxon>
        <taxon>Euarchontoglires</taxon>
        <taxon>Glires</taxon>
        <taxon>Rodentia</taxon>
        <taxon>Myomorpha</taxon>
        <taxon>Muroidea</taxon>
        <taxon>Muridae</taxon>
        <taxon>Murinae</taxon>
        <taxon>Mus</taxon>
        <taxon>Mus</taxon>
    </lineage>
</organism>
<feature type="chain" id="PRO_0000232690" description="Ubiquitin-conjugating enzyme E2 W">
    <location>
        <begin position="1"/>
        <end position="151"/>
    </location>
</feature>
<feature type="domain" description="UBC core" evidence="2">
    <location>
        <begin position="3"/>
        <end position="151"/>
    </location>
</feature>
<feature type="active site" description="Glycyl thioester intermediate" evidence="2">
    <location>
        <position position="91"/>
    </location>
</feature>
<feature type="cross-link" description="Peptide (Met-Gly) (interchain with G-Cter in ubiquitin)" evidence="1">
    <location>
        <position position="1"/>
    </location>
</feature>
<feature type="mutagenesis site" description="Loss of in vitro ubiquitin-conjugating activity." evidence="3">
    <original>C</original>
    <variation>S</variation>
    <location>
        <position position="91"/>
    </location>
</feature>
<feature type="sequence conflict" description="In Ref. 1; BAC37094." evidence="5" ref="1">
    <original>M</original>
    <variation>L</variation>
    <location>
        <position position="1"/>
    </location>
</feature>
<feature type="sequence conflict" description="In Ref. 1; BAB29807." evidence="5" ref="1">
    <original>QWI</original>
    <variation>HGV</variation>
    <location>
        <begin position="36"/>
        <end position="38"/>
    </location>
</feature>
<feature type="sequence conflict" description="In Ref. 1; BAC37094." evidence="5" ref="1">
    <original>W</original>
    <variation>V</variation>
    <location>
        <position position="37"/>
    </location>
</feature>
<accession>Q8VDW4</accession>
<accession>Q8BVJ8</accession>
<accession>Q9D5H3</accession>
<reference key="1">
    <citation type="journal article" date="2005" name="Science">
        <title>The transcriptional landscape of the mammalian genome.</title>
        <authorList>
            <person name="Carninci P."/>
            <person name="Kasukawa T."/>
            <person name="Katayama S."/>
            <person name="Gough J."/>
            <person name="Frith M.C."/>
            <person name="Maeda N."/>
            <person name="Oyama R."/>
            <person name="Ravasi T."/>
            <person name="Lenhard B."/>
            <person name="Wells C."/>
            <person name="Kodzius R."/>
            <person name="Shimokawa K."/>
            <person name="Bajic V.B."/>
            <person name="Brenner S.E."/>
            <person name="Batalov S."/>
            <person name="Forrest A.R."/>
            <person name="Zavolan M."/>
            <person name="Davis M.J."/>
            <person name="Wilming L.G."/>
            <person name="Aidinis V."/>
            <person name="Allen J.E."/>
            <person name="Ambesi-Impiombato A."/>
            <person name="Apweiler R."/>
            <person name="Aturaliya R.N."/>
            <person name="Bailey T.L."/>
            <person name="Bansal M."/>
            <person name="Baxter L."/>
            <person name="Beisel K.W."/>
            <person name="Bersano T."/>
            <person name="Bono H."/>
            <person name="Chalk A.M."/>
            <person name="Chiu K.P."/>
            <person name="Choudhary V."/>
            <person name="Christoffels A."/>
            <person name="Clutterbuck D.R."/>
            <person name="Crowe M.L."/>
            <person name="Dalla E."/>
            <person name="Dalrymple B.P."/>
            <person name="de Bono B."/>
            <person name="Della Gatta G."/>
            <person name="di Bernardo D."/>
            <person name="Down T."/>
            <person name="Engstrom P."/>
            <person name="Fagiolini M."/>
            <person name="Faulkner G."/>
            <person name="Fletcher C.F."/>
            <person name="Fukushima T."/>
            <person name="Furuno M."/>
            <person name="Futaki S."/>
            <person name="Gariboldi M."/>
            <person name="Georgii-Hemming P."/>
            <person name="Gingeras T.R."/>
            <person name="Gojobori T."/>
            <person name="Green R.E."/>
            <person name="Gustincich S."/>
            <person name="Harbers M."/>
            <person name="Hayashi Y."/>
            <person name="Hensch T.K."/>
            <person name="Hirokawa N."/>
            <person name="Hill D."/>
            <person name="Huminiecki L."/>
            <person name="Iacono M."/>
            <person name="Ikeo K."/>
            <person name="Iwama A."/>
            <person name="Ishikawa T."/>
            <person name="Jakt M."/>
            <person name="Kanapin A."/>
            <person name="Katoh M."/>
            <person name="Kawasawa Y."/>
            <person name="Kelso J."/>
            <person name="Kitamura H."/>
            <person name="Kitano H."/>
            <person name="Kollias G."/>
            <person name="Krishnan S.P."/>
            <person name="Kruger A."/>
            <person name="Kummerfeld S.K."/>
            <person name="Kurochkin I.V."/>
            <person name="Lareau L.F."/>
            <person name="Lazarevic D."/>
            <person name="Lipovich L."/>
            <person name="Liu J."/>
            <person name="Liuni S."/>
            <person name="McWilliam S."/>
            <person name="Madan Babu M."/>
            <person name="Madera M."/>
            <person name="Marchionni L."/>
            <person name="Matsuda H."/>
            <person name="Matsuzawa S."/>
            <person name="Miki H."/>
            <person name="Mignone F."/>
            <person name="Miyake S."/>
            <person name="Morris K."/>
            <person name="Mottagui-Tabar S."/>
            <person name="Mulder N."/>
            <person name="Nakano N."/>
            <person name="Nakauchi H."/>
            <person name="Ng P."/>
            <person name="Nilsson R."/>
            <person name="Nishiguchi S."/>
            <person name="Nishikawa S."/>
            <person name="Nori F."/>
            <person name="Ohara O."/>
            <person name="Okazaki Y."/>
            <person name="Orlando V."/>
            <person name="Pang K.C."/>
            <person name="Pavan W.J."/>
            <person name="Pavesi G."/>
            <person name="Pesole G."/>
            <person name="Petrovsky N."/>
            <person name="Piazza S."/>
            <person name="Reed J."/>
            <person name="Reid J.F."/>
            <person name="Ring B.Z."/>
            <person name="Ringwald M."/>
            <person name="Rost B."/>
            <person name="Ruan Y."/>
            <person name="Salzberg S.L."/>
            <person name="Sandelin A."/>
            <person name="Schneider C."/>
            <person name="Schoenbach C."/>
            <person name="Sekiguchi K."/>
            <person name="Semple C.A."/>
            <person name="Seno S."/>
            <person name="Sessa L."/>
            <person name="Sheng Y."/>
            <person name="Shibata Y."/>
            <person name="Shimada H."/>
            <person name="Shimada K."/>
            <person name="Silva D."/>
            <person name="Sinclair B."/>
            <person name="Sperling S."/>
            <person name="Stupka E."/>
            <person name="Sugiura K."/>
            <person name="Sultana R."/>
            <person name="Takenaka Y."/>
            <person name="Taki K."/>
            <person name="Tammoja K."/>
            <person name="Tan S.L."/>
            <person name="Tang S."/>
            <person name="Taylor M.S."/>
            <person name="Tegner J."/>
            <person name="Teichmann S.A."/>
            <person name="Ueda H.R."/>
            <person name="van Nimwegen E."/>
            <person name="Verardo R."/>
            <person name="Wei C.L."/>
            <person name="Yagi K."/>
            <person name="Yamanishi H."/>
            <person name="Zabarovsky E."/>
            <person name="Zhu S."/>
            <person name="Zimmer A."/>
            <person name="Hide W."/>
            <person name="Bult C."/>
            <person name="Grimmond S.M."/>
            <person name="Teasdale R.D."/>
            <person name="Liu E.T."/>
            <person name="Brusic V."/>
            <person name="Quackenbush J."/>
            <person name="Wahlestedt C."/>
            <person name="Mattick J.S."/>
            <person name="Hume D.A."/>
            <person name="Kai C."/>
            <person name="Sasaki D."/>
            <person name="Tomaru Y."/>
            <person name="Fukuda S."/>
            <person name="Kanamori-Katayama M."/>
            <person name="Suzuki M."/>
            <person name="Aoki J."/>
            <person name="Arakawa T."/>
            <person name="Iida J."/>
            <person name="Imamura K."/>
            <person name="Itoh M."/>
            <person name="Kato T."/>
            <person name="Kawaji H."/>
            <person name="Kawagashira N."/>
            <person name="Kawashima T."/>
            <person name="Kojima M."/>
            <person name="Kondo S."/>
            <person name="Konno H."/>
            <person name="Nakano K."/>
            <person name="Ninomiya N."/>
            <person name="Nishio T."/>
            <person name="Okada M."/>
            <person name="Plessy C."/>
            <person name="Shibata K."/>
            <person name="Shiraki T."/>
            <person name="Suzuki S."/>
            <person name="Tagami M."/>
            <person name="Waki K."/>
            <person name="Watahiki A."/>
            <person name="Okamura-Oho Y."/>
            <person name="Suzuki H."/>
            <person name="Kawai J."/>
            <person name="Hayashizaki Y."/>
        </authorList>
    </citation>
    <scope>NUCLEOTIDE SEQUENCE [LARGE SCALE MRNA]</scope>
    <source>
        <strain>C57BL/6J</strain>
        <tissue>Cerebellum</tissue>
        <tissue>Corpora quadrigemina</tissue>
        <tissue>Embryo</tissue>
        <tissue>Retina</tissue>
        <tissue>Thymus</tissue>
    </source>
</reference>
<reference key="2">
    <citation type="journal article" date="2004" name="Genome Res.">
        <title>The status, quality, and expansion of the NIH full-length cDNA project: the Mammalian Gene Collection (MGC).</title>
        <authorList>
            <consortium name="The MGC Project Team"/>
        </authorList>
    </citation>
    <scope>NUCLEOTIDE SEQUENCE [LARGE SCALE MRNA]</scope>
    <source>
        <strain>Czech II</strain>
        <tissue>Mammary tumor</tissue>
    </source>
</reference>
<reference key="3">
    <citation type="journal article" date="2011" name="Mol. Cell">
        <title>Ube2w and ataxin-3 coordinately regulate the ubiquitin ligase CHIP.</title>
        <authorList>
            <person name="Scaglione K.M."/>
            <person name="Zavodszky E."/>
            <person name="Todi S.V."/>
            <person name="Patury S."/>
            <person name="Xu P."/>
            <person name="Rodriguez-Lebron E."/>
            <person name="Fischer S."/>
            <person name="Konen J."/>
            <person name="Djarmati A."/>
            <person name="Peng J."/>
            <person name="Gestwicki J.E."/>
            <person name="Paulson H.L."/>
        </authorList>
    </citation>
    <scope>FUNCTION</scope>
    <scope>INTERACTION WITH STUB1</scope>
</reference>
<reference key="4">
    <citation type="journal article" date="2011" name="Mol. Cells">
        <title>UBE2W interacts with FANCL and regulates the monoubiquitination of Fanconi anemia protein FANCD2.</title>
        <authorList>
            <person name="Zhang Y."/>
            <person name="Zhou X."/>
            <person name="Zhao L."/>
            <person name="Li C."/>
            <person name="Zhu H."/>
            <person name="Xu L."/>
            <person name="Shan L."/>
            <person name="Liao X."/>
            <person name="Guo Z."/>
            <person name="Huang P."/>
        </authorList>
    </citation>
    <scope>FUNCTION</scope>
    <scope>INTERACTION WITH FANCL</scope>
    <scope>SUBCELLULAR LOCATION</scope>
    <scope>MUTAGENESIS OF CYS-91</scope>
</reference>
<sequence length="151" mass="17345">MASMQKRLQKELLALQNDPPPGMTLNEKSVQNSITQWIVDMEGAPGTLYEGEKFQLLFKFSSRYPFDSPQVMFTGENIPIHPHVYSNGHICLSILTEDWSPALSVQSVCLSIISMLSSCKEKRRPPDNSFYVRTCNKNPKKTKWWYHDDTC</sequence>
<gene>
    <name type="primary">Ube2w</name>
</gene>
<evidence type="ECO:0000250" key="1">
    <source>
        <dbReference type="UniProtKB" id="Q96B02"/>
    </source>
</evidence>
<evidence type="ECO:0000255" key="2">
    <source>
        <dbReference type="PROSITE-ProRule" id="PRU00388"/>
    </source>
</evidence>
<evidence type="ECO:0000269" key="3">
    <source>
    </source>
</evidence>
<evidence type="ECO:0000269" key="4">
    <source>
    </source>
</evidence>
<evidence type="ECO:0000305" key="5"/>